<name>HLD_STAAS</name>
<protein>
    <recommendedName>
        <fullName>Delta-hemolysin</fullName>
        <shortName>Delta-lysin</shortName>
    </recommendedName>
    <alternativeName>
        <fullName>Delta-toxin</fullName>
    </alternativeName>
</protein>
<dbReference type="EMBL" id="BX571857">
    <property type="protein sequence ID" value="CAG43747.1"/>
    <property type="status" value="ALT_INIT"/>
    <property type="molecule type" value="Genomic_DNA"/>
</dbReference>
<dbReference type="SMR" id="Q6G7S2"/>
<dbReference type="KEGG" id="sas:SAS1940a"/>
<dbReference type="HOGENOM" id="CLU_3222291_0_0_9"/>
<dbReference type="GO" id="GO:0005576">
    <property type="term" value="C:extracellular region"/>
    <property type="evidence" value="ECO:0007669"/>
    <property type="project" value="UniProtKB-SubCell"/>
</dbReference>
<dbReference type="GO" id="GO:0020002">
    <property type="term" value="C:host cell plasma membrane"/>
    <property type="evidence" value="ECO:0007669"/>
    <property type="project" value="UniProtKB-SubCell"/>
</dbReference>
<dbReference type="GO" id="GO:0016020">
    <property type="term" value="C:membrane"/>
    <property type="evidence" value="ECO:0007669"/>
    <property type="project" value="UniProtKB-KW"/>
</dbReference>
<dbReference type="GO" id="GO:0090729">
    <property type="term" value="F:toxin activity"/>
    <property type="evidence" value="ECO:0007669"/>
    <property type="project" value="UniProtKB-KW"/>
</dbReference>
<dbReference type="GO" id="GO:0019836">
    <property type="term" value="P:symbiont-mediated hemolysis of host erythrocyte"/>
    <property type="evidence" value="ECO:0007669"/>
    <property type="project" value="InterPro"/>
</dbReference>
<dbReference type="InterPro" id="IPR008034">
    <property type="entry name" value="Delta_lysin"/>
</dbReference>
<dbReference type="NCBIfam" id="NF011338">
    <property type="entry name" value="PRK14752.1-4"/>
    <property type="match status" value="1"/>
</dbReference>
<dbReference type="Pfam" id="PF05372">
    <property type="entry name" value="Delta_lysin"/>
    <property type="match status" value="1"/>
</dbReference>
<proteinExistence type="inferred from homology"/>
<reference key="1">
    <citation type="journal article" date="2004" name="Proc. Natl. Acad. Sci. U.S.A.">
        <title>Complete genomes of two clinical Staphylococcus aureus strains: evidence for the rapid evolution of virulence and drug resistance.</title>
        <authorList>
            <person name="Holden M.T.G."/>
            <person name="Feil E.J."/>
            <person name="Lindsay J.A."/>
            <person name="Peacock S.J."/>
            <person name="Day N.P.J."/>
            <person name="Enright M.C."/>
            <person name="Foster T.J."/>
            <person name="Moore C.E."/>
            <person name="Hurst L."/>
            <person name="Atkin R."/>
            <person name="Barron A."/>
            <person name="Bason N."/>
            <person name="Bentley S.D."/>
            <person name="Chillingworth C."/>
            <person name="Chillingworth T."/>
            <person name="Churcher C."/>
            <person name="Clark L."/>
            <person name="Corton C."/>
            <person name="Cronin A."/>
            <person name="Doggett J."/>
            <person name="Dowd L."/>
            <person name="Feltwell T."/>
            <person name="Hance Z."/>
            <person name="Harris B."/>
            <person name="Hauser H."/>
            <person name="Holroyd S."/>
            <person name="Jagels K."/>
            <person name="James K.D."/>
            <person name="Lennard N."/>
            <person name="Line A."/>
            <person name="Mayes R."/>
            <person name="Moule S."/>
            <person name="Mungall K."/>
            <person name="Ormond D."/>
            <person name="Quail M.A."/>
            <person name="Rabbinowitsch E."/>
            <person name="Rutherford K.M."/>
            <person name="Sanders M."/>
            <person name="Sharp S."/>
            <person name="Simmonds M."/>
            <person name="Stevens K."/>
            <person name="Whitehead S."/>
            <person name="Barrell B.G."/>
            <person name="Spratt B.G."/>
            <person name="Parkhill J."/>
        </authorList>
    </citation>
    <scope>NUCLEOTIDE SEQUENCE [LARGE SCALE GENOMIC DNA]</scope>
    <source>
        <strain>MSSA476</strain>
    </source>
</reference>
<comment type="function">
    <text evidence="1">Lyses erythrocytes and many other mammalian cells.</text>
</comment>
<comment type="subcellular location">
    <subcellularLocation>
        <location evidence="1">Secreted</location>
    </subcellularLocation>
    <subcellularLocation>
        <location evidence="1">Host cell membrane</location>
    </subcellularLocation>
    <text evidence="1">In infected cells, it is found in the membrane.</text>
</comment>
<comment type="similarity">
    <text evidence="2">Belongs to the delta-lysin family.</text>
</comment>
<comment type="sequence caution" evidence="2">
    <conflict type="erroneous initiation">
        <sequence resource="EMBL-CDS" id="CAG43747"/>
    </conflict>
</comment>
<evidence type="ECO:0000250" key="1"/>
<evidence type="ECO:0000305" key="2"/>
<organism>
    <name type="scientific">Staphylococcus aureus (strain MSSA476)</name>
    <dbReference type="NCBI Taxonomy" id="282459"/>
    <lineage>
        <taxon>Bacteria</taxon>
        <taxon>Bacillati</taxon>
        <taxon>Bacillota</taxon>
        <taxon>Bacilli</taxon>
        <taxon>Bacillales</taxon>
        <taxon>Staphylococcaceae</taxon>
        <taxon>Staphylococcus</taxon>
    </lineage>
</organism>
<keyword id="KW-0204">Cytolysis</keyword>
<keyword id="KW-0291">Formylation</keyword>
<keyword id="KW-0354">Hemolysis</keyword>
<keyword id="KW-1032">Host cell membrane</keyword>
<keyword id="KW-1043">Host membrane</keyword>
<keyword id="KW-0472">Membrane</keyword>
<keyword id="KW-0964">Secreted</keyword>
<keyword id="KW-0800">Toxin</keyword>
<keyword id="KW-0812">Transmembrane</keyword>
<keyword id="KW-0843">Virulence</keyword>
<feature type="peptide" id="PRO_0000035644" description="Delta-hemolysin">
    <location>
        <begin position="1"/>
        <end position="26"/>
    </location>
</feature>
<feature type="modified residue" description="N-formylmethionine" evidence="1">
    <location>
        <position position="1"/>
    </location>
</feature>
<accession>Q6G7S2</accession>
<sequence length="26" mass="3009">MAQDIISTISDLVKWIIDTVNKFTKK</sequence>
<gene>
    <name type="primary">hld</name>
    <name type="ordered locus">SAS1940.1</name>
    <name type="ORF">SAS1940a</name>
</gene>